<feature type="chain" id="PRO_0000326769" description="Acylphosphatase">
    <location>
        <begin position="1"/>
        <end position="92"/>
    </location>
</feature>
<feature type="domain" description="Acylphosphatase-like" evidence="1">
    <location>
        <begin position="5"/>
        <end position="92"/>
    </location>
</feature>
<feature type="active site" evidence="1">
    <location>
        <position position="20"/>
    </location>
</feature>
<feature type="active site" evidence="1">
    <location>
        <position position="38"/>
    </location>
</feature>
<accession>Q7N5Z2</accession>
<protein>
    <recommendedName>
        <fullName evidence="1">Acylphosphatase</fullName>
        <ecNumber evidence="1">3.6.1.7</ecNumber>
    </recommendedName>
    <alternativeName>
        <fullName evidence="1">Acylphosphate phosphohydrolase</fullName>
    </alternativeName>
</protein>
<gene>
    <name type="primary">acyP</name>
    <name type="ordered locus">plu1785</name>
</gene>
<comment type="catalytic activity">
    <reaction evidence="1">
        <text>an acyl phosphate + H2O = a carboxylate + phosphate + H(+)</text>
        <dbReference type="Rhea" id="RHEA:14965"/>
        <dbReference type="ChEBI" id="CHEBI:15377"/>
        <dbReference type="ChEBI" id="CHEBI:15378"/>
        <dbReference type="ChEBI" id="CHEBI:29067"/>
        <dbReference type="ChEBI" id="CHEBI:43474"/>
        <dbReference type="ChEBI" id="CHEBI:59918"/>
        <dbReference type="EC" id="3.6.1.7"/>
    </reaction>
</comment>
<comment type="similarity">
    <text evidence="1">Belongs to the acylphosphatase family.</text>
</comment>
<dbReference type="EC" id="3.6.1.7" evidence="1"/>
<dbReference type="EMBL" id="BX571865">
    <property type="protein sequence ID" value="CAE14078.1"/>
    <property type="molecule type" value="Genomic_DNA"/>
</dbReference>
<dbReference type="RefSeq" id="WP_011146063.1">
    <property type="nucleotide sequence ID" value="NC_005126.1"/>
</dbReference>
<dbReference type="SMR" id="Q7N5Z2"/>
<dbReference type="STRING" id="243265.plu1785"/>
<dbReference type="GeneID" id="48848063"/>
<dbReference type="KEGG" id="plu:plu1785"/>
<dbReference type="eggNOG" id="COG1254">
    <property type="taxonomic scope" value="Bacteria"/>
</dbReference>
<dbReference type="HOGENOM" id="CLU_141932_2_1_6"/>
<dbReference type="OrthoDB" id="5295388at2"/>
<dbReference type="Proteomes" id="UP000002514">
    <property type="component" value="Chromosome"/>
</dbReference>
<dbReference type="GO" id="GO:0003998">
    <property type="term" value="F:acylphosphatase activity"/>
    <property type="evidence" value="ECO:0007669"/>
    <property type="project" value="UniProtKB-UniRule"/>
</dbReference>
<dbReference type="Gene3D" id="3.30.70.100">
    <property type="match status" value="1"/>
</dbReference>
<dbReference type="HAMAP" id="MF_01450">
    <property type="entry name" value="Acylphosphatase_entero"/>
    <property type="match status" value="1"/>
</dbReference>
<dbReference type="InterPro" id="IPR020456">
    <property type="entry name" value="Acylphosphatase"/>
</dbReference>
<dbReference type="InterPro" id="IPR001792">
    <property type="entry name" value="Acylphosphatase-like_dom"/>
</dbReference>
<dbReference type="InterPro" id="IPR036046">
    <property type="entry name" value="Acylphosphatase-like_dom_sf"/>
</dbReference>
<dbReference type="InterPro" id="IPR028627">
    <property type="entry name" value="Acylphosphatase_bac"/>
</dbReference>
<dbReference type="InterPro" id="IPR017968">
    <property type="entry name" value="Acylphosphatase_CS"/>
</dbReference>
<dbReference type="NCBIfam" id="NF011000">
    <property type="entry name" value="PRK14426.1"/>
    <property type="match status" value="1"/>
</dbReference>
<dbReference type="PANTHER" id="PTHR47268">
    <property type="entry name" value="ACYLPHOSPHATASE"/>
    <property type="match status" value="1"/>
</dbReference>
<dbReference type="PANTHER" id="PTHR47268:SF4">
    <property type="entry name" value="ACYLPHOSPHATASE"/>
    <property type="match status" value="1"/>
</dbReference>
<dbReference type="Pfam" id="PF00708">
    <property type="entry name" value="Acylphosphatase"/>
    <property type="match status" value="1"/>
</dbReference>
<dbReference type="PRINTS" id="PR00112">
    <property type="entry name" value="ACYLPHPHTASE"/>
</dbReference>
<dbReference type="SUPFAM" id="SSF54975">
    <property type="entry name" value="Acylphosphatase/BLUF domain-like"/>
    <property type="match status" value="1"/>
</dbReference>
<dbReference type="PROSITE" id="PS00150">
    <property type="entry name" value="ACYLPHOSPHATASE_1"/>
    <property type="match status" value="1"/>
</dbReference>
<dbReference type="PROSITE" id="PS51160">
    <property type="entry name" value="ACYLPHOSPHATASE_3"/>
    <property type="match status" value="1"/>
</dbReference>
<reference key="1">
    <citation type="journal article" date="2003" name="Nat. Biotechnol.">
        <title>The genome sequence of the entomopathogenic bacterium Photorhabdus luminescens.</title>
        <authorList>
            <person name="Duchaud E."/>
            <person name="Rusniok C."/>
            <person name="Frangeul L."/>
            <person name="Buchrieser C."/>
            <person name="Givaudan A."/>
            <person name="Taourit S."/>
            <person name="Bocs S."/>
            <person name="Boursaux-Eude C."/>
            <person name="Chandler M."/>
            <person name="Charles J.-F."/>
            <person name="Dassa E."/>
            <person name="Derose R."/>
            <person name="Derzelle S."/>
            <person name="Freyssinet G."/>
            <person name="Gaudriault S."/>
            <person name="Medigue C."/>
            <person name="Lanois A."/>
            <person name="Powell K."/>
            <person name="Siguier P."/>
            <person name="Vincent R."/>
            <person name="Wingate V."/>
            <person name="Zouine M."/>
            <person name="Glaser P."/>
            <person name="Boemare N."/>
            <person name="Danchin A."/>
            <person name="Kunst F."/>
        </authorList>
    </citation>
    <scope>NUCLEOTIDE SEQUENCE [LARGE SCALE GENOMIC DNA]</scope>
    <source>
        <strain>DSM 15139 / CIP 105565 / TT01</strain>
    </source>
</reference>
<keyword id="KW-0378">Hydrolase</keyword>
<keyword id="KW-1185">Reference proteome</keyword>
<evidence type="ECO:0000255" key="1">
    <source>
        <dbReference type="HAMAP-Rule" id="MF_01450"/>
    </source>
</evidence>
<proteinExistence type="inferred from homology"/>
<name>ACYP_PHOLL</name>
<sequence length="92" mass="10400">MIKYGVTIYVYGRVQGVGFRYQTFRWAKLNRLTGYVCNLHDGSVKIVAYGDSEQLNTLTHWLEQGGPPGARIDNFSSQSCAVEDIADFIVRH</sequence>
<organism>
    <name type="scientific">Photorhabdus laumondii subsp. laumondii (strain DSM 15139 / CIP 105565 / TT01)</name>
    <name type="common">Photorhabdus luminescens subsp. laumondii</name>
    <dbReference type="NCBI Taxonomy" id="243265"/>
    <lineage>
        <taxon>Bacteria</taxon>
        <taxon>Pseudomonadati</taxon>
        <taxon>Pseudomonadota</taxon>
        <taxon>Gammaproteobacteria</taxon>
        <taxon>Enterobacterales</taxon>
        <taxon>Morganellaceae</taxon>
        <taxon>Photorhabdus</taxon>
    </lineage>
</organism>